<dbReference type="EC" id="2.6.1.52" evidence="1"/>
<dbReference type="EMBL" id="CP000931">
    <property type="protein sequence ID" value="ABZ76602.1"/>
    <property type="molecule type" value="Genomic_DNA"/>
</dbReference>
<dbReference type="RefSeq" id="WP_012277132.1">
    <property type="nucleotide sequence ID" value="NC_010334.1"/>
</dbReference>
<dbReference type="SMR" id="B0TT41"/>
<dbReference type="STRING" id="458817.Shal_2041"/>
<dbReference type="KEGG" id="shl:Shal_2041"/>
<dbReference type="eggNOG" id="COG1932">
    <property type="taxonomic scope" value="Bacteria"/>
</dbReference>
<dbReference type="HOGENOM" id="CLU_034866_0_2_6"/>
<dbReference type="OrthoDB" id="9809412at2"/>
<dbReference type="UniPathway" id="UPA00135">
    <property type="reaction ID" value="UER00197"/>
</dbReference>
<dbReference type="UniPathway" id="UPA00244">
    <property type="reaction ID" value="UER00311"/>
</dbReference>
<dbReference type="Proteomes" id="UP000001317">
    <property type="component" value="Chromosome"/>
</dbReference>
<dbReference type="GO" id="GO:0005737">
    <property type="term" value="C:cytoplasm"/>
    <property type="evidence" value="ECO:0007669"/>
    <property type="project" value="UniProtKB-SubCell"/>
</dbReference>
<dbReference type="GO" id="GO:0004648">
    <property type="term" value="F:O-phospho-L-serine:2-oxoglutarate aminotransferase activity"/>
    <property type="evidence" value="ECO:0007669"/>
    <property type="project" value="UniProtKB-UniRule"/>
</dbReference>
<dbReference type="GO" id="GO:0030170">
    <property type="term" value="F:pyridoxal phosphate binding"/>
    <property type="evidence" value="ECO:0007669"/>
    <property type="project" value="UniProtKB-UniRule"/>
</dbReference>
<dbReference type="GO" id="GO:0006564">
    <property type="term" value="P:L-serine biosynthetic process"/>
    <property type="evidence" value="ECO:0007669"/>
    <property type="project" value="UniProtKB-UniRule"/>
</dbReference>
<dbReference type="GO" id="GO:0008615">
    <property type="term" value="P:pyridoxine biosynthetic process"/>
    <property type="evidence" value="ECO:0007669"/>
    <property type="project" value="UniProtKB-UniRule"/>
</dbReference>
<dbReference type="FunFam" id="3.40.640.10:FF:000010">
    <property type="entry name" value="Phosphoserine aminotransferase"/>
    <property type="match status" value="1"/>
</dbReference>
<dbReference type="FunFam" id="3.90.1150.10:FF:000006">
    <property type="entry name" value="Phosphoserine aminotransferase"/>
    <property type="match status" value="1"/>
</dbReference>
<dbReference type="Gene3D" id="3.90.1150.10">
    <property type="entry name" value="Aspartate Aminotransferase, domain 1"/>
    <property type="match status" value="1"/>
</dbReference>
<dbReference type="Gene3D" id="3.40.640.10">
    <property type="entry name" value="Type I PLP-dependent aspartate aminotransferase-like (Major domain)"/>
    <property type="match status" value="1"/>
</dbReference>
<dbReference type="HAMAP" id="MF_00160">
    <property type="entry name" value="SerC_aminotrans_5"/>
    <property type="match status" value="1"/>
</dbReference>
<dbReference type="InterPro" id="IPR000192">
    <property type="entry name" value="Aminotrans_V_dom"/>
</dbReference>
<dbReference type="InterPro" id="IPR020578">
    <property type="entry name" value="Aminotrans_V_PyrdxlP_BS"/>
</dbReference>
<dbReference type="InterPro" id="IPR022278">
    <property type="entry name" value="Pser_aminoTfrase"/>
</dbReference>
<dbReference type="InterPro" id="IPR015424">
    <property type="entry name" value="PyrdxlP-dep_Trfase"/>
</dbReference>
<dbReference type="InterPro" id="IPR015421">
    <property type="entry name" value="PyrdxlP-dep_Trfase_major"/>
</dbReference>
<dbReference type="InterPro" id="IPR015422">
    <property type="entry name" value="PyrdxlP-dep_Trfase_small"/>
</dbReference>
<dbReference type="NCBIfam" id="NF003764">
    <property type="entry name" value="PRK05355.1"/>
    <property type="match status" value="1"/>
</dbReference>
<dbReference type="NCBIfam" id="TIGR01364">
    <property type="entry name" value="serC_1"/>
    <property type="match status" value="1"/>
</dbReference>
<dbReference type="PANTHER" id="PTHR43247">
    <property type="entry name" value="PHOSPHOSERINE AMINOTRANSFERASE"/>
    <property type="match status" value="1"/>
</dbReference>
<dbReference type="PANTHER" id="PTHR43247:SF1">
    <property type="entry name" value="PHOSPHOSERINE AMINOTRANSFERASE"/>
    <property type="match status" value="1"/>
</dbReference>
<dbReference type="Pfam" id="PF00266">
    <property type="entry name" value="Aminotran_5"/>
    <property type="match status" value="1"/>
</dbReference>
<dbReference type="PIRSF" id="PIRSF000525">
    <property type="entry name" value="SerC"/>
    <property type="match status" value="1"/>
</dbReference>
<dbReference type="SUPFAM" id="SSF53383">
    <property type="entry name" value="PLP-dependent transferases"/>
    <property type="match status" value="1"/>
</dbReference>
<dbReference type="PROSITE" id="PS00595">
    <property type="entry name" value="AA_TRANSFER_CLASS_5"/>
    <property type="match status" value="1"/>
</dbReference>
<feature type="chain" id="PRO_1000203568" description="Phosphoserine aminotransferase">
    <location>
        <begin position="1"/>
        <end position="363"/>
    </location>
</feature>
<feature type="binding site" evidence="1">
    <location>
        <position position="42"/>
    </location>
    <ligand>
        <name>L-glutamate</name>
        <dbReference type="ChEBI" id="CHEBI:29985"/>
    </ligand>
</feature>
<feature type="binding site" evidence="1">
    <location>
        <begin position="76"/>
        <end position="77"/>
    </location>
    <ligand>
        <name>pyridoxal 5'-phosphate</name>
        <dbReference type="ChEBI" id="CHEBI:597326"/>
    </ligand>
</feature>
<feature type="binding site" evidence="1">
    <location>
        <position position="102"/>
    </location>
    <ligand>
        <name>pyridoxal 5'-phosphate</name>
        <dbReference type="ChEBI" id="CHEBI:597326"/>
    </ligand>
</feature>
<feature type="binding site" evidence="1">
    <location>
        <position position="156"/>
    </location>
    <ligand>
        <name>pyridoxal 5'-phosphate</name>
        <dbReference type="ChEBI" id="CHEBI:597326"/>
    </ligand>
</feature>
<feature type="binding site" evidence="1">
    <location>
        <position position="175"/>
    </location>
    <ligand>
        <name>pyridoxal 5'-phosphate</name>
        <dbReference type="ChEBI" id="CHEBI:597326"/>
    </ligand>
</feature>
<feature type="binding site" evidence="1">
    <location>
        <position position="198"/>
    </location>
    <ligand>
        <name>pyridoxal 5'-phosphate</name>
        <dbReference type="ChEBI" id="CHEBI:597326"/>
    </ligand>
</feature>
<feature type="binding site" evidence="1">
    <location>
        <begin position="240"/>
        <end position="241"/>
    </location>
    <ligand>
        <name>pyridoxal 5'-phosphate</name>
        <dbReference type="ChEBI" id="CHEBI:597326"/>
    </ligand>
</feature>
<feature type="modified residue" description="N6-(pyridoxal phosphate)lysine" evidence="1">
    <location>
        <position position="199"/>
    </location>
</feature>
<gene>
    <name evidence="1" type="primary">serC</name>
    <name type="ordered locus">Shal_2041</name>
</gene>
<name>SERC_SHEHH</name>
<accession>B0TT41</accession>
<organism>
    <name type="scientific">Shewanella halifaxensis (strain HAW-EB4)</name>
    <dbReference type="NCBI Taxonomy" id="458817"/>
    <lineage>
        <taxon>Bacteria</taxon>
        <taxon>Pseudomonadati</taxon>
        <taxon>Pseudomonadota</taxon>
        <taxon>Gammaproteobacteria</taxon>
        <taxon>Alteromonadales</taxon>
        <taxon>Shewanellaceae</taxon>
        <taxon>Shewanella</taxon>
    </lineage>
</organism>
<keyword id="KW-0028">Amino-acid biosynthesis</keyword>
<keyword id="KW-0032">Aminotransferase</keyword>
<keyword id="KW-0963">Cytoplasm</keyword>
<keyword id="KW-0663">Pyridoxal phosphate</keyword>
<keyword id="KW-0664">Pyridoxine biosynthesis</keyword>
<keyword id="KW-0718">Serine biosynthesis</keyword>
<keyword id="KW-0808">Transferase</keyword>
<sequence>MSAIFNFCAGPAMLPPAVMQKAQKELLNWNGQGVSVMEVSHRSKEFIALTEQAEADLRQLMDIPFNYHVLFMHGGGRGQFSAVVNNFLGNDGKALYLVDGSWSKAAVEEAEKLAGKDKIDTIDIVSTVQGKREVSIPDLTQIDKDYRYLHYCPNETVDGIEIFESINSPWPVIADMSSNILSRKIDVSQFGLIYAGAQKNIGPSGLSIVIVRDDMLVLPSLPQSSIMDYRLAVENDSMYNTPPTFAWYLAAEVFSWLKSVGGVCEMEKLNLEKAKRLYQCIDELDFYVSGVAKQNRSRMNVTFQLTNSELNSQFLEEAQVAGLVALKGHRSVGGMRASIYNAMPLEGVDTLVEFMQAFAAKHS</sequence>
<comment type="function">
    <text evidence="1">Catalyzes the reversible conversion of 3-phosphohydroxypyruvate to phosphoserine and of 3-hydroxy-2-oxo-4-phosphonooxybutanoate to phosphohydroxythreonine.</text>
</comment>
<comment type="catalytic activity">
    <reaction evidence="1">
        <text>O-phospho-L-serine + 2-oxoglutarate = 3-phosphooxypyruvate + L-glutamate</text>
        <dbReference type="Rhea" id="RHEA:14329"/>
        <dbReference type="ChEBI" id="CHEBI:16810"/>
        <dbReference type="ChEBI" id="CHEBI:18110"/>
        <dbReference type="ChEBI" id="CHEBI:29985"/>
        <dbReference type="ChEBI" id="CHEBI:57524"/>
        <dbReference type="EC" id="2.6.1.52"/>
    </reaction>
</comment>
<comment type="catalytic activity">
    <reaction evidence="1">
        <text>4-(phosphooxy)-L-threonine + 2-oxoglutarate = (R)-3-hydroxy-2-oxo-4-phosphooxybutanoate + L-glutamate</text>
        <dbReference type="Rhea" id="RHEA:16573"/>
        <dbReference type="ChEBI" id="CHEBI:16810"/>
        <dbReference type="ChEBI" id="CHEBI:29985"/>
        <dbReference type="ChEBI" id="CHEBI:58452"/>
        <dbReference type="ChEBI" id="CHEBI:58538"/>
        <dbReference type="EC" id="2.6.1.52"/>
    </reaction>
</comment>
<comment type="cofactor">
    <cofactor evidence="1">
        <name>pyridoxal 5'-phosphate</name>
        <dbReference type="ChEBI" id="CHEBI:597326"/>
    </cofactor>
    <text evidence="1">Binds 1 pyridoxal phosphate per subunit.</text>
</comment>
<comment type="pathway">
    <text evidence="1">Amino-acid biosynthesis; L-serine biosynthesis; L-serine from 3-phospho-D-glycerate: step 2/3.</text>
</comment>
<comment type="pathway">
    <text evidence="1">Cofactor biosynthesis; pyridoxine 5'-phosphate biosynthesis; pyridoxine 5'-phosphate from D-erythrose 4-phosphate: step 3/5.</text>
</comment>
<comment type="subunit">
    <text evidence="1">Homodimer.</text>
</comment>
<comment type="subcellular location">
    <subcellularLocation>
        <location evidence="1">Cytoplasm</location>
    </subcellularLocation>
</comment>
<comment type="similarity">
    <text evidence="1">Belongs to the class-V pyridoxal-phosphate-dependent aminotransferase family. SerC subfamily.</text>
</comment>
<protein>
    <recommendedName>
        <fullName evidence="1">Phosphoserine aminotransferase</fullName>
        <ecNumber evidence="1">2.6.1.52</ecNumber>
    </recommendedName>
    <alternativeName>
        <fullName evidence="1">Phosphohydroxythreonine aminotransferase</fullName>
        <shortName evidence="1">PSAT</shortName>
    </alternativeName>
</protein>
<reference key="1">
    <citation type="submission" date="2008-01" db="EMBL/GenBank/DDBJ databases">
        <title>Complete sequence of Shewanella halifaxensis HAW-EB4.</title>
        <authorList>
            <consortium name="US DOE Joint Genome Institute"/>
            <person name="Copeland A."/>
            <person name="Lucas S."/>
            <person name="Lapidus A."/>
            <person name="Glavina del Rio T."/>
            <person name="Dalin E."/>
            <person name="Tice H."/>
            <person name="Bruce D."/>
            <person name="Goodwin L."/>
            <person name="Pitluck S."/>
            <person name="Sims D."/>
            <person name="Brettin T."/>
            <person name="Detter J.C."/>
            <person name="Han C."/>
            <person name="Kuske C.R."/>
            <person name="Schmutz J."/>
            <person name="Larimer F."/>
            <person name="Land M."/>
            <person name="Hauser L."/>
            <person name="Kyrpides N."/>
            <person name="Kim E."/>
            <person name="Zhao J.-S."/>
            <person name="Richardson P."/>
        </authorList>
    </citation>
    <scope>NUCLEOTIDE SEQUENCE [LARGE SCALE GENOMIC DNA]</scope>
    <source>
        <strain>HAW-EB4</strain>
    </source>
</reference>
<proteinExistence type="inferred from homology"/>
<evidence type="ECO:0000255" key="1">
    <source>
        <dbReference type="HAMAP-Rule" id="MF_00160"/>
    </source>
</evidence>